<sequence>RPPGFDPFR</sequence>
<organism>
    <name type="scientific">Pelophylax ridibundus</name>
    <name type="common">Marsh frog</name>
    <name type="synonym">Rana ridibunda</name>
    <dbReference type="NCBI Taxonomy" id="8406"/>
    <lineage>
        <taxon>Eukaryota</taxon>
        <taxon>Metazoa</taxon>
        <taxon>Chordata</taxon>
        <taxon>Craniata</taxon>
        <taxon>Vertebrata</taxon>
        <taxon>Euteleostomi</taxon>
        <taxon>Amphibia</taxon>
        <taxon>Batrachia</taxon>
        <taxon>Anura</taxon>
        <taxon>Neobatrachia</taxon>
        <taxon>Ranoidea</taxon>
        <taxon>Ranidae</taxon>
        <taxon>Pelophylax</taxon>
    </lineage>
</organism>
<reference evidence="4" key="1">
    <citation type="journal article" date="2008" name="Rapid Commun. Mass Spectrom.">
        <title>De novo sequencing of peptides secreted by the skin glands of the caucasian green frog Rana ridibunda.</title>
        <authorList>
            <person name="Samgina T.Y."/>
            <person name="Artemenko K.A."/>
            <person name="Gorshkov V.A."/>
            <person name="Ogourtsov S.V."/>
            <person name="Zubarev R.A."/>
            <person name="Lebedev A.T."/>
        </authorList>
    </citation>
    <scope>PROTEIN SEQUENCE</scope>
    <scope>MASS SPECTROMETRY</scope>
    <source>
        <tissue evidence="2">Skin secretion</tissue>
    </source>
</reference>
<name>BRK3_PELRI</name>
<comment type="function">
    <text evidence="1">Induces relaxation of arterial smooth muscle, by targeting bradykinin receptors (BDKRB).</text>
</comment>
<comment type="subcellular location">
    <subcellularLocation>
        <location evidence="4">Secreted</location>
    </subcellularLocation>
</comment>
<comment type="tissue specificity">
    <text evidence="4">Expressed by the skin glands.</text>
</comment>
<comment type="mass spectrometry"/>
<comment type="similarity">
    <text evidence="4">Belongs to the bradykinin-related peptide family.</text>
</comment>
<proteinExistence type="evidence at protein level"/>
<keyword id="KW-0878">Amphibian defense peptide</keyword>
<keyword id="KW-0903">Direct protein sequencing</keyword>
<keyword id="KW-1213">G-protein coupled receptor impairing toxin</keyword>
<keyword id="KW-0964">Secreted</keyword>
<keyword id="KW-0800">Toxin</keyword>
<keyword id="KW-0838">Vasoactive</keyword>
<keyword id="KW-0840">Vasodilator</keyword>
<evidence type="ECO:0000250" key="1"/>
<evidence type="ECO:0000269" key="2">
    <source>
    </source>
</evidence>
<evidence type="ECO:0000303" key="3">
    <source>
    </source>
</evidence>
<evidence type="ECO:0000305" key="4"/>
<accession>P86035</accession>
<protein>
    <recommendedName>
        <fullName evidence="3">[Asp6]-bradykinin</fullName>
    </recommendedName>
</protein>
<feature type="peptide" id="PRO_0000361078" description="[Asp6]-bradykinin" evidence="2">
    <location>
        <begin position="1"/>
        <end position="9"/>
    </location>
</feature>
<dbReference type="GO" id="GO:0005576">
    <property type="term" value="C:extracellular region"/>
    <property type="evidence" value="ECO:0007669"/>
    <property type="project" value="UniProtKB-SubCell"/>
</dbReference>
<dbReference type="GO" id="GO:0090729">
    <property type="term" value="F:toxin activity"/>
    <property type="evidence" value="ECO:0007669"/>
    <property type="project" value="UniProtKB-KW"/>
</dbReference>
<dbReference type="GO" id="GO:0006952">
    <property type="term" value="P:defense response"/>
    <property type="evidence" value="ECO:0007669"/>
    <property type="project" value="UniProtKB-KW"/>
</dbReference>
<dbReference type="GO" id="GO:0042311">
    <property type="term" value="P:vasodilation"/>
    <property type="evidence" value="ECO:0007669"/>
    <property type="project" value="UniProtKB-KW"/>
</dbReference>